<proteinExistence type="inferred from homology"/>
<organism>
    <name type="scientific">Streptococcus mutans serotype c (strain ATCC 700610 / UA159)</name>
    <dbReference type="NCBI Taxonomy" id="210007"/>
    <lineage>
        <taxon>Bacteria</taxon>
        <taxon>Bacillati</taxon>
        <taxon>Bacillota</taxon>
        <taxon>Bacilli</taxon>
        <taxon>Lactobacillales</taxon>
        <taxon>Streptococcaceae</taxon>
        <taxon>Streptococcus</taxon>
    </lineage>
</organism>
<gene>
    <name evidence="1" type="primary">rplK</name>
    <name type="synonym">rl11</name>
    <name type="ordered locus">SMU_1627</name>
</gene>
<feature type="chain" id="PRO_0000104382" description="Large ribosomal subunit protein uL11">
    <location>
        <begin position="1"/>
        <end position="141"/>
    </location>
</feature>
<protein>
    <recommendedName>
        <fullName evidence="1">Large ribosomal subunit protein uL11</fullName>
    </recommendedName>
    <alternativeName>
        <fullName evidence="2">50S ribosomal protein L11</fullName>
    </alternativeName>
</protein>
<reference key="1">
    <citation type="journal article" date="2002" name="Proc. Natl. Acad. Sci. U.S.A.">
        <title>Genome sequence of Streptococcus mutans UA159, a cariogenic dental pathogen.</title>
        <authorList>
            <person name="Ajdic D.J."/>
            <person name="McShan W.M."/>
            <person name="McLaughlin R.E."/>
            <person name="Savic G."/>
            <person name="Chang J."/>
            <person name="Carson M.B."/>
            <person name="Primeaux C."/>
            <person name="Tian R."/>
            <person name="Kenton S."/>
            <person name="Jia H.G."/>
            <person name="Lin S.P."/>
            <person name="Qian Y."/>
            <person name="Li S."/>
            <person name="Zhu H."/>
            <person name="Najar F.Z."/>
            <person name="Lai H."/>
            <person name="White J."/>
            <person name="Roe B.A."/>
            <person name="Ferretti J.J."/>
        </authorList>
    </citation>
    <scope>NUCLEOTIDE SEQUENCE [LARGE SCALE GENOMIC DNA]</scope>
    <source>
        <strain>ATCC 700610 / UA159</strain>
    </source>
</reference>
<sequence>MAKKVENIVKLQIPAGKATPAPPVGPALGQAGINIMGFTKEFNARTADQAGMIIPVVISVYEDKSFDFVTKTPPAAVLLKKAAGVDKGSGEPNKTKVASVTRAQVQEIAETKMPDLNAANLESAMRMIEGTARSMGFTVTD</sequence>
<name>RL11_STRMU</name>
<dbReference type="EMBL" id="AE014133">
    <property type="protein sequence ID" value="AAN59268.1"/>
    <property type="molecule type" value="Genomic_DNA"/>
</dbReference>
<dbReference type="RefSeq" id="NP_721962.1">
    <property type="nucleotide sequence ID" value="NC_004350.2"/>
</dbReference>
<dbReference type="RefSeq" id="WP_002263607.1">
    <property type="nucleotide sequence ID" value="NC_004350.2"/>
</dbReference>
<dbReference type="SMR" id="Q8DSX9"/>
<dbReference type="STRING" id="210007.SMU_1627"/>
<dbReference type="GeneID" id="93858946"/>
<dbReference type="KEGG" id="smu:SMU_1627"/>
<dbReference type="PATRIC" id="fig|210007.7.peg.1450"/>
<dbReference type="eggNOG" id="COG0080">
    <property type="taxonomic scope" value="Bacteria"/>
</dbReference>
<dbReference type="HOGENOM" id="CLU_074237_2_1_9"/>
<dbReference type="OrthoDB" id="9802408at2"/>
<dbReference type="PhylomeDB" id="Q8DSX9"/>
<dbReference type="Proteomes" id="UP000002512">
    <property type="component" value="Chromosome"/>
</dbReference>
<dbReference type="GO" id="GO:0022625">
    <property type="term" value="C:cytosolic large ribosomal subunit"/>
    <property type="evidence" value="ECO:0007669"/>
    <property type="project" value="TreeGrafter"/>
</dbReference>
<dbReference type="GO" id="GO:0070180">
    <property type="term" value="F:large ribosomal subunit rRNA binding"/>
    <property type="evidence" value="ECO:0007669"/>
    <property type="project" value="UniProtKB-UniRule"/>
</dbReference>
<dbReference type="GO" id="GO:0003735">
    <property type="term" value="F:structural constituent of ribosome"/>
    <property type="evidence" value="ECO:0007669"/>
    <property type="project" value="InterPro"/>
</dbReference>
<dbReference type="GO" id="GO:0006412">
    <property type="term" value="P:translation"/>
    <property type="evidence" value="ECO:0007669"/>
    <property type="project" value="UniProtKB-UniRule"/>
</dbReference>
<dbReference type="CDD" id="cd00349">
    <property type="entry name" value="Ribosomal_L11"/>
    <property type="match status" value="1"/>
</dbReference>
<dbReference type="FunFam" id="1.10.10.250:FF:000001">
    <property type="entry name" value="50S ribosomal protein L11"/>
    <property type="match status" value="1"/>
</dbReference>
<dbReference type="FunFam" id="3.30.1550.10:FF:000001">
    <property type="entry name" value="50S ribosomal protein L11"/>
    <property type="match status" value="1"/>
</dbReference>
<dbReference type="Gene3D" id="1.10.10.250">
    <property type="entry name" value="Ribosomal protein L11, C-terminal domain"/>
    <property type="match status" value="1"/>
</dbReference>
<dbReference type="Gene3D" id="3.30.1550.10">
    <property type="entry name" value="Ribosomal protein L11/L12, N-terminal domain"/>
    <property type="match status" value="1"/>
</dbReference>
<dbReference type="HAMAP" id="MF_00736">
    <property type="entry name" value="Ribosomal_uL11"/>
    <property type="match status" value="1"/>
</dbReference>
<dbReference type="InterPro" id="IPR000911">
    <property type="entry name" value="Ribosomal_uL11"/>
</dbReference>
<dbReference type="InterPro" id="IPR006519">
    <property type="entry name" value="Ribosomal_uL11_bac-typ"/>
</dbReference>
<dbReference type="InterPro" id="IPR020783">
    <property type="entry name" value="Ribosomal_uL11_C"/>
</dbReference>
<dbReference type="InterPro" id="IPR036769">
    <property type="entry name" value="Ribosomal_uL11_C_sf"/>
</dbReference>
<dbReference type="InterPro" id="IPR020785">
    <property type="entry name" value="Ribosomal_uL11_CS"/>
</dbReference>
<dbReference type="InterPro" id="IPR020784">
    <property type="entry name" value="Ribosomal_uL11_N"/>
</dbReference>
<dbReference type="InterPro" id="IPR036796">
    <property type="entry name" value="Ribosomal_uL11_N_sf"/>
</dbReference>
<dbReference type="NCBIfam" id="TIGR01632">
    <property type="entry name" value="L11_bact"/>
    <property type="match status" value="1"/>
</dbReference>
<dbReference type="PANTHER" id="PTHR11661">
    <property type="entry name" value="60S RIBOSOMAL PROTEIN L12"/>
    <property type="match status" value="1"/>
</dbReference>
<dbReference type="PANTHER" id="PTHR11661:SF1">
    <property type="entry name" value="LARGE RIBOSOMAL SUBUNIT PROTEIN UL11M"/>
    <property type="match status" value="1"/>
</dbReference>
<dbReference type="Pfam" id="PF00298">
    <property type="entry name" value="Ribosomal_L11"/>
    <property type="match status" value="1"/>
</dbReference>
<dbReference type="Pfam" id="PF03946">
    <property type="entry name" value="Ribosomal_L11_N"/>
    <property type="match status" value="1"/>
</dbReference>
<dbReference type="SMART" id="SM00649">
    <property type="entry name" value="RL11"/>
    <property type="match status" value="1"/>
</dbReference>
<dbReference type="SUPFAM" id="SSF54747">
    <property type="entry name" value="Ribosomal L11/L12e N-terminal domain"/>
    <property type="match status" value="1"/>
</dbReference>
<dbReference type="SUPFAM" id="SSF46906">
    <property type="entry name" value="Ribosomal protein L11, C-terminal domain"/>
    <property type="match status" value="1"/>
</dbReference>
<dbReference type="PROSITE" id="PS00359">
    <property type="entry name" value="RIBOSOMAL_L11"/>
    <property type="match status" value="1"/>
</dbReference>
<comment type="function">
    <text evidence="1">Forms part of the ribosomal stalk which helps the ribosome interact with GTP-bound translation factors.</text>
</comment>
<comment type="subunit">
    <text evidence="1">Part of the ribosomal stalk of the 50S ribosomal subunit. Interacts with L10 and the large rRNA to form the base of the stalk. L10 forms an elongated spine to which L12 dimers bind in a sequential fashion forming a multimeric L10(L12)X complex.</text>
</comment>
<comment type="PTM">
    <text evidence="1">One or more lysine residues are methylated.</text>
</comment>
<comment type="similarity">
    <text evidence="1">Belongs to the universal ribosomal protein uL11 family.</text>
</comment>
<evidence type="ECO:0000255" key="1">
    <source>
        <dbReference type="HAMAP-Rule" id="MF_00736"/>
    </source>
</evidence>
<evidence type="ECO:0000305" key="2"/>
<keyword id="KW-0488">Methylation</keyword>
<keyword id="KW-1185">Reference proteome</keyword>
<keyword id="KW-0687">Ribonucleoprotein</keyword>
<keyword id="KW-0689">Ribosomal protein</keyword>
<keyword id="KW-0694">RNA-binding</keyword>
<keyword id="KW-0699">rRNA-binding</keyword>
<accession>Q8DSX9</accession>